<proteinExistence type="evidence at protein level"/>
<evidence type="ECO:0000269" key="1">
    <source>
    </source>
</evidence>
<evidence type="ECO:0007829" key="2">
    <source>
        <dbReference type="PDB" id="2Q7F"/>
    </source>
</evidence>
<dbReference type="EMBL" id="AL009126">
    <property type="protein sequence ID" value="CAB14690.1"/>
    <property type="molecule type" value="Genomic_DNA"/>
</dbReference>
<dbReference type="PIR" id="H69978">
    <property type="entry name" value="H69978"/>
</dbReference>
<dbReference type="RefSeq" id="NP_390626.1">
    <property type="nucleotide sequence ID" value="NC_000964.3"/>
</dbReference>
<dbReference type="RefSeq" id="WP_010886584.1">
    <property type="nucleotide sequence ID" value="NZ_OZ025638.1"/>
</dbReference>
<dbReference type="PDB" id="2Q7F">
    <property type="method" value="X-ray"/>
    <property type="resolution" value="2.49 A"/>
    <property type="chains" value="A/B=4-202"/>
</dbReference>
<dbReference type="PDBsum" id="2Q7F"/>
<dbReference type="SMR" id="O34452"/>
<dbReference type="FunCoup" id="O34452">
    <property type="interactions" value="269"/>
</dbReference>
<dbReference type="STRING" id="224308.BSU27490"/>
<dbReference type="PaxDb" id="224308-BSU27490"/>
<dbReference type="EnsemblBacteria" id="CAB14690">
    <property type="protein sequence ID" value="CAB14690"/>
    <property type="gene ID" value="BSU_27490"/>
</dbReference>
<dbReference type="GeneID" id="938093"/>
<dbReference type="KEGG" id="bsu:BSU27490"/>
<dbReference type="PATRIC" id="fig|224308.43.peg.2869"/>
<dbReference type="eggNOG" id="COG0457">
    <property type="taxonomic scope" value="Bacteria"/>
</dbReference>
<dbReference type="InParanoid" id="O34452"/>
<dbReference type="OrthoDB" id="9769030at2"/>
<dbReference type="PhylomeDB" id="O34452"/>
<dbReference type="BioCyc" id="BSUB:BSU27490-MONOMER"/>
<dbReference type="EvolutionaryTrace" id="O34452"/>
<dbReference type="Proteomes" id="UP000001570">
    <property type="component" value="Chromosome"/>
</dbReference>
<dbReference type="Gene3D" id="1.25.40.10">
    <property type="entry name" value="Tetratricopeptide repeat domain"/>
    <property type="match status" value="1"/>
</dbReference>
<dbReference type="InterPro" id="IPR011990">
    <property type="entry name" value="TPR-like_helical_dom_sf"/>
</dbReference>
<dbReference type="InterPro" id="IPR019734">
    <property type="entry name" value="TPR_rpt"/>
</dbReference>
<dbReference type="InterPro" id="IPR050498">
    <property type="entry name" value="Ycf3"/>
</dbReference>
<dbReference type="PANTHER" id="PTHR44858">
    <property type="entry name" value="TETRATRICOPEPTIDE REPEAT PROTEIN 6"/>
    <property type="match status" value="1"/>
</dbReference>
<dbReference type="PANTHER" id="PTHR44858:SF1">
    <property type="entry name" value="UDP-N-ACETYLGLUCOSAMINE--PEPTIDE N-ACETYLGLUCOSAMINYLTRANSFERASE SPINDLY-RELATED"/>
    <property type="match status" value="1"/>
</dbReference>
<dbReference type="Pfam" id="PF12895">
    <property type="entry name" value="ANAPC3"/>
    <property type="match status" value="1"/>
</dbReference>
<dbReference type="Pfam" id="PF14559">
    <property type="entry name" value="TPR_19"/>
    <property type="match status" value="1"/>
</dbReference>
<dbReference type="Pfam" id="PF13181">
    <property type="entry name" value="TPR_8"/>
    <property type="match status" value="1"/>
</dbReference>
<dbReference type="SMART" id="SM00028">
    <property type="entry name" value="TPR"/>
    <property type="match status" value="6"/>
</dbReference>
<dbReference type="SUPFAM" id="SSF48452">
    <property type="entry name" value="TPR-like"/>
    <property type="match status" value="1"/>
</dbReference>
<dbReference type="PROSITE" id="PS50005">
    <property type="entry name" value="TPR"/>
    <property type="match status" value="6"/>
</dbReference>
<dbReference type="PROSITE" id="PS50293">
    <property type="entry name" value="TPR_REGION"/>
    <property type="match status" value="1"/>
</dbReference>
<organism>
    <name type="scientific">Bacillus subtilis (strain 168)</name>
    <dbReference type="NCBI Taxonomy" id="224308"/>
    <lineage>
        <taxon>Bacteria</taxon>
        <taxon>Bacillati</taxon>
        <taxon>Bacillota</taxon>
        <taxon>Bacilli</taxon>
        <taxon>Bacillales</taxon>
        <taxon>Bacillaceae</taxon>
        <taxon>Bacillus</taxon>
    </lineage>
</organism>
<reference key="1">
    <citation type="journal article" date="1997" name="Nature">
        <title>The complete genome sequence of the Gram-positive bacterium Bacillus subtilis.</title>
        <authorList>
            <person name="Kunst F."/>
            <person name="Ogasawara N."/>
            <person name="Moszer I."/>
            <person name="Albertini A.M."/>
            <person name="Alloni G."/>
            <person name="Azevedo V."/>
            <person name="Bertero M.G."/>
            <person name="Bessieres P."/>
            <person name="Bolotin A."/>
            <person name="Borchert S."/>
            <person name="Borriss R."/>
            <person name="Boursier L."/>
            <person name="Brans A."/>
            <person name="Braun M."/>
            <person name="Brignell S.C."/>
            <person name="Bron S."/>
            <person name="Brouillet S."/>
            <person name="Bruschi C.V."/>
            <person name="Caldwell B."/>
            <person name="Capuano V."/>
            <person name="Carter N.M."/>
            <person name="Choi S.-K."/>
            <person name="Codani J.-J."/>
            <person name="Connerton I.F."/>
            <person name="Cummings N.J."/>
            <person name="Daniel R.A."/>
            <person name="Denizot F."/>
            <person name="Devine K.M."/>
            <person name="Duesterhoeft A."/>
            <person name="Ehrlich S.D."/>
            <person name="Emmerson P.T."/>
            <person name="Entian K.-D."/>
            <person name="Errington J."/>
            <person name="Fabret C."/>
            <person name="Ferrari E."/>
            <person name="Foulger D."/>
            <person name="Fritz C."/>
            <person name="Fujita M."/>
            <person name="Fujita Y."/>
            <person name="Fuma S."/>
            <person name="Galizzi A."/>
            <person name="Galleron N."/>
            <person name="Ghim S.-Y."/>
            <person name="Glaser P."/>
            <person name="Goffeau A."/>
            <person name="Golightly E.J."/>
            <person name="Grandi G."/>
            <person name="Guiseppi G."/>
            <person name="Guy B.J."/>
            <person name="Haga K."/>
            <person name="Haiech J."/>
            <person name="Harwood C.R."/>
            <person name="Henaut A."/>
            <person name="Hilbert H."/>
            <person name="Holsappel S."/>
            <person name="Hosono S."/>
            <person name="Hullo M.-F."/>
            <person name="Itaya M."/>
            <person name="Jones L.-M."/>
            <person name="Joris B."/>
            <person name="Karamata D."/>
            <person name="Kasahara Y."/>
            <person name="Klaerr-Blanchard M."/>
            <person name="Klein C."/>
            <person name="Kobayashi Y."/>
            <person name="Koetter P."/>
            <person name="Koningstein G."/>
            <person name="Krogh S."/>
            <person name="Kumano M."/>
            <person name="Kurita K."/>
            <person name="Lapidus A."/>
            <person name="Lardinois S."/>
            <person name="Lauber J."/>
            <person name="Lazarevic V."/>
            <person name="Lee S.-M."/>
            <person name="Levine A."/>
            <person name="Liu H."/>
            <person name="Masuda S."/>
            <person name="Mauel C."/>
            <person name="Medigue C."/>
            <person name="Medina N."/>
            <person name="Mellado R.P."/>
            <person name="Mizuno M."/>
            <person name="Moestl D."/>
            <person name="Nakai S."/>
            <person name="Noback M."/>
            <person name="Noone D."/>
            <person name="O'Reilly M."/>
            <person name="Ogawa K."/>
            <person name="Ogiwara A."/>
            <person name="Oudega B."/>
            <person name="Park S.-H."/>
            <person name="Parro V."/>
            <person name="Pohl T.M."/>
            <person name="Portetelle D."/>
            <person name="Porwollik S."/>
            <person name="Prescott A.M."/>
            <person name="Presecan E."/>
            <person name="Pujic P."/>
            <person name="Purnelle B."/>
            <person name="Rapoport G."/>
            <person name="Rey M."/>
            <person name="Reynolds S."/>
            <person name="Rieger M."/>
            <person name="Rivolta C."/>
            <person name="Rocha E."/>
            <person name="Roche B."/>
            <person name="Rose M."/>
            <person name="Sadaie Y."/>
            <person name="Sato T."/>
            <person name="Scanlan E."/>
            <person name="Schleich S."/>
            <person name="Schroeter R."/>
            <person name="Scoffone F."/>
            <person name="Sekiguchi J."/>
            <person name="Sekowska A."/>
            <person name="Seror S.J."/>
            <person name="Serror P."/>
            <person name="Shin B.-S."/>
            <person name="Soldo B."/>
            <person name="Sorokin A."/>
            <person name="Tacconi E."/>
            <person name="Takagi T."/>
            <person name="Takahashi H."/>
            <person name="Takemaru K."/>
            <person name="Takeuchi M."/>
            <person name="Tamakoshi A."/>
            <person name="Tanaka T."/>
            <person name="Terpstra P."/>
            <person name="Tognoni A."/>
            <person name="Tosato V."/>
            <person name="Uchiyama S."/>
            <person name="Vandenbol M."/>
            <person name="Vannier F."/>
            <person name="Vassarotti A."/>
            <person name="Viari A."/>
            <person name="Wambutt R."/>
            <person name="Wedler E."/>
            <person name="Wedler H."/>
            <person name="Weitzenegger T."/>
            <person name="Winters P."/>
            <person name="Wipat A."/>
            <person name="Yamamoto H."/>
            <person name="Yamane K."/>
            <person name="Yasumoto K."/>
            <person name="Yata K."/>
            <person name="Yoshida K."/>
            <person name="Yoshikawa H.-F."/>
            <person name="Zumstein E."/>
            <person name="Yoshikawa H."/>
            <person name="Danchin A."/>
        </authorList>
    </citation>
    <scope>NUCLEOTIDE SEQUENCE [LARGE SCALE GENOMIC DNA]</scope>
    <source>
        <strain>168</strain>
    </source>
</reference>
<reference key="2">
    <citation type="journal article" date="2007" name="Biochem. Biophys. Res. Commun.">
        <title>Crystal structure of YrrB: a TPR protein with an unusual peptide-binding site.</title>
        <authorList>
            <person name="Han D."/>
            <person name="Oh J."/>
            <person name="Kim K."/>
            <person name="Lim H."/>
            <person name="Kim Y."/>
        </authorList>
    </citation>
    <scope>X-RAY CRYSTALLOGRAPHY (2.49 ANGSTROMS) OF 4-202</scope>
    <scope>PUTATIVE FUNCTION</scope>
    <scope>SUBUNIT</scope>
    <source>
        <strain>168</strain>
    </source>
</reference>
<protein>
    <recommendedName>
        <fullName>TPR repeat-containing protein YrrB</fullName>
    </recommendedName>
</protein>
<name>YRRB_BACSU</name>
<keyword id="KW-0002">3D-structure</keyword>
<keyword id="KW-1185">Reference proteome</keyword>
<keyword id="KW-0677">Repeat</keyword>
<keyword id="KW-0802">TPR repeat</keyword>
<feature type="chain" id="PRO_0000379128" description="TPR repeat-containing protein YrrB">
    <location>
        <begin position="1"/>
        <end position="206"/>
    </location>
</feature>
<feature type="repeat" description="TPR 1">
    <location>
        <begin position="1"/>
        <end position="23"/>
    </location>
</feature>
<feature type="repeat" description="TPR 2">
    <location>
        <begin position="24"/>
        <end position="57"/>
    </location>
</feature>
<feature type="repeat" description="TPR 3">
    <location>
        <begin position="59"/>
        <end position="91"/>
    </location>
</feature>
<feature type="repeat" description="TPR 4">
    <location>
        <begin position="93"/>
        <end position="125"/>
    </location>
</feature>
<feature type="repeat" description="TPR 5">
    <location>
        <begin position="127"/>
        <end position="159"/>
    </location>
</feature>
<feature type="repeat" description="TPR 6">
    <location>
        <begin position="160"/>
        <end position="193"/>
    </location>
</feature>
<feature type="helix" evidence="2">
    <location>
        <begin position="13"/>
        <end position="17"/>
    </location>
</feature>
<feature type="helix" evidence="2">
    <location>
        <begin position="24"/>
        <end position="36"/>
    </location>
</feature>
<feature type="helix" evidence="2">
    <location>
        <begin position="40"/>
        <end position="53"/>
    </location>
</feature>
<feature type="helix" evidence="2">
    <location>
        <begin position="58"/>
        <end position="70"/>
    </location>
</feature>
<feature type="helix" evidence="2">
    <location>
        <begin position="74"/>
        <end position="87"/>
    </location>
</feature>
<feature type="helix" evidence="2">
    <location>
        <begin position="92"/>
        <end position="104"/>
    </location>
</feature>
<feature type="helix" evidence="2">
    <location>
        <begin position="108"/>
        <end position="121"/>
    </location>
</feature>
<feature type="helix" evidence="2">
    <location>
        <begin position="126"/>
        <end position="139"/>
    </location>
</feature>
<feature type="helix" evidence="2">
    <location>
        <begin position="143"/>
        <end position="155"/>
    </location>
</feature>
<feature type="helix" evidence="2">
    <location>
        <begin position="160"/>
        <end position="172"/>
    </location>
</feature>
<feature type="helix" evidence="2">
    <location>
        <begin position="178"/>
        <end position="189"/>
    </location>
</feature>
<feature type="helix" evidence="2">
    <location>
        <begin position="194"/>
        <end position="200"/>
    </location>
</feature>
<gene>
    <name type="primary">yrrB</name>
    <name type="ordered locus">BSU27490</name>
</gene>
<sequence>MQEGDYEKAAEAFTKAIEENKEDAIPYINFANLLSSVNELERALAFYDKALELDSSAATAYYGAGNVYVVKEMYKEAKDMFEKALRAGMENGDLFYMLGTVLVKLEQPKLALPYLQRAVELNENDTEARFQFGMCLANEGMLDEALSQFAAVTEQDPGHADAFYNAGVTYAYKENREKALEMLDKAIDIQPDHMLALHAKKLIDPS</sequence>
<comment type="function">
    <text>Could be an interacting mediator in the complex formation among RNA sulfuration components, RNA processing components, and aminoacyl-tRNA synthetases.</text>
</comment>
<comment type="subunit">
    <text evidence="1">Monomer.</text>
</comment>
<accession>O34452</accession>